<gene>
    <name type="primary">sbcB</name>
    <name type="ordered locus">bbp_503</name>
</gene>
<name>EX1_BUCBP</name>
<keyword id="KW-0227">DNA damage</keyword>
<keyword id="KW-0234">DNA repair</keyword>
<keyword id="KW-0238">DNA-binding</keyword>
<keyword id="KW-0269">Exonuclease</keyword>
<keyword id="KW-0378">Hydrolase</keyword>
<keyword id="KW-0460">Magnesium</keyword>
<keyword id="KW-0479">Metal-binding</keyword>
<keyword id="KW-0540">Nuclease</keyword>
<keyword id="KW-1185">Reference proteome</keyword>
<proteinExistence type="inferred from homology"/>
<sequence length="481" mass="57404">MDIQKNTSLTFLFYDYETFGKNPALDKPSQFSCIQTDIDFNIIGSIQEIFCYPSVDYLPDPESVLITGISPKYTSLFGVNEFEFAKKIYSLFMKSDTCIIGYNNIYFDDEFTRNIFYRNFLNSYEWSWKNGNSRWDMLDLLRACYVLRPEGINWPRNEDNSVSLRLSDISLANNIVHNVAHNASSDVYATMNIAKLIKQKKPKLFNFFFKYRTKKAILTLIDVNSLNPIVYISRFFGVVNRYISYIVPILWHPINSNILVSIDLSQDVQKILNFFKRNSILNVNYKEIFLMGIRFIYVNRCPILIPTNVIRMKDRIRLRINYKLFQNNLVLLRKNIFLKKKLKKFLCSIAEAPKYNGSNVDLKMYNSFFSYIDNNVIKNIHSTLPKRIKINFMKYDNRINQLFILFLARYRPDMLDYSEKYFWIQRYLNIFSYANIQKYENKILKLIVKYKNHVRNVQLLEELFEYVKYTRKNFLKSIFTN</sequence>
<comment type="function">
    <text evidence="1">Degrades single-stranded DNA (ssDNA) in a highly processive manner. Also functions as a DNA deoxyribophosphodiesterase that releases deoxyribose-phosphate moieties following the cleavage of DNA at an apurinic/apyrimidinic (AP) site by either an AP endonuclease or AP lyase.</text>
</comment>
<comment type="catalytic activity">
    <reaction evidence="1">
        <text>Exonucleolytic cleavage in the 3'- to 5'-direction to yield nucleoside 5'-phosphates.</text>
        <dbReference type="EC" id="3.1.11.1"/>
    </reaction>
</comment>
<comment type="cofactor">
    <cofactor evidence="1">
        <name>Mg(2+)</name>
        <dbReference type="ChEBI" id="CHEBI:18420"/>
    </cofactor>
    <text evidence="1">Binds 2 Mg(2+) ions per monomer.</text>
</comment>
<comment type="subunit">
    <text evidence="1">Monomer. Interacts with ssb (via C-terminus); this interaction stimulates the exonuclease activity by recruiting the enzyme to its substrate.</text>
</comment>
<comment type="domain">
    <text evidence="1">The N-terminal exonuclease domain and the exonuclease C-terminal domain form a central positively charged groove which binds the DNA.</text>
</comment>
<protein>
    <recommendedName>
        <fullName>Exodeoxyribonuclease I</fullName>
        <shortName>ExoI</shortName>
        <shortName>Exonuclease I</shortName>
        <ecNumber evidence="1">3.1.11.1</ecNumber>
    </recommendedName>
    <alternativeName>
        <fullName>DNA deoxyribophosphodiesterase</fullName>
        <shortName>dRPase</shortName>
    </alternativeName>
</protein>
<accession>Q89A43</accession>
<reference key="1">
    <citation type="journal article" date="2003" name="Proc. Natl. Acad. Sci. U.S.A.">
        <title>Reductive genome evolution in Buchnera aphidicola.</title>
        <authorList>
            <person name="van Ham R.C.H.J."/>
            <person name="Kamerbeek J."/>
            <person name="Palacios C."/>
            <person name="Rausell C."/>
            <person name="Abascal F."/>
            <person name="Bastolla U."/>
            <person name="Fernandez J.M."/>
            <person name="Jimenez L."/>
            <person name="Postigo M."/>
            <person name="Silva F.J."/>
            <person name="Tamames J."/>
            <person name="Viguera E."/>
            <person name="Latorre A."/>
            <person name="Valencia A."/>
            <person name="Moran F."/>
            <person name="Moya A."/>
        </authorList>
    </citation>
    <scope>NUCLEOTIDE SEQUENCE [LARGE SCALE GENOMIC DNA]</scope>
    <source>
        <strain>Bp</strain>
    </source>
</reference>
<evidence type="ECO:0000250" key="1">
    <source>
        <dbReference type="UniProtKB" id="P04995"/>
    </source>
</evidence>
<evidence type="ECO:0000255" key="2"/>
<evidence type="ECO:0000255" key="3">
    <source>
        <dbReference type="PROSITE-ProRule" id="PRU01120"/>
    </source>
</evidence>
<evidence type="ECO:0000255" key="4">
    <source>
        <dbReference type="PROSITE-ProRule" id="PRU01121"/>
    </source>
</evidence>
<feature type="chain" id="PRO_0000087109" description="Exodeoxyribonuclease I">
    <location>
        <begin position="1"/>
        <end position="481"/>
    </location>
</feature>
<feature type="domain" description="Exonuclease" evidence="2">
    <location>
        <begin position="12"/>
        <end position="193"/>
    </location>
</feature>
<feature type="domain" description="ExoI SH3-like" evidence="3">
    <location>
        <begin position="202"/>
        <end position="350"/>
    </location>
</feature>
<feature type="domain" description="ExoI C-terminal" evidence="4">
    <location>
        <begin position="356"/>
        <end position="471"/>
    </location>
</feature>
<feature type="binding site" evidence="1">
    <location>
        <position position="15"/>
    </location>
    <ligand>
        <name>Mg(2+)</name>
        <dbReference type="ChEBI" id="CHEBI:18420"/>
        <label>1</label>
    </ligand>
</feature>
<feature type="binding site" evidence="1">
    <location>
        <position position="17"/>
    </location>
    <ligand>
        <name>Mg(2+)</name>
        <dbReference type="ChEBI" id="CHEBI:18420"/>
        <label>2</label>
    </ligand>
</feature>
<feature type="binding site" evidence="1">
    <location>
        <position position="17"/>
    </location>
    <ligand>
        <name>substrate</name>
    </ligand>
</feature>
<feature type="binding site" evidence="1">
    <location>
        <position position="186"/>
    </location>
    <ligand>
        <name>Mg(2+)</name>
        <dbReference type="ChEBI" id="CHEBI:18420"/>
        <label>2</label>
    </ligand>
</feature>
<feature type="site" description="Interaction with single-stranded DNA" evidence="1">
    <location>
        <position position="113"/>
    </location>
</feature>
<feature type="site" description="Interaction with single-stranded DNA" evidence="1">
    <location>
        <position position="124"/>
    </location>
</feature>
<feature type="site" description="Interaction with single-stranded DNA" evidence="1">
    <location>
        <position position="128"/>
    </location>
</feature>
<feature type="site" description="Interaction with single-stranded DNA" evidence="1">
    <location>
        <position position="142"/>
    </location>
</feature>
<feature type="site" description="Important for interaction with ssb" evidence="1">
    <location>
        <position position="148"/>
    </location>
</feature>
<feature type="site" description="Important for activity" evidence="1">
    <location>
        <position position="181"/>
    </location>
</feature>
<feature type="site" description="Interaction with single-stranded DNA" evidence="1">
    <location>
        <position position="214"/>
    </location>
</feature>
<feature type="site" description="Interaction with single-stranded DNA" evidence="1">
    <location>
        <position position="257"/>
    </location>
</feature>
<feature type="site" description="Interaction with single-stranded DNA" evidence="1">
    <location>
        <position position="299"/>
    </location>
</feature>
<feature type="site" description="Interaction with single-stranded DNA" evidence="1">
    <location>
        <position position="365"/>
    </location>
</feature>
<feature type="site" description="Interaction with single-stranded DNA" evidence="1">
    <location>
        <position position="368"/>
    </location>
</feature>
<dbReference type="EC" id="3.1.11.1" evidence="1"/>
<dbReference type="EMBL" id="AE016826">
    <property type="protein sequence ID" value="AAO27208.1"/>
    <property type="molecule type" value="Genomic_DNA"/>
</dbReference>
<dbReference type="RefSeq" id="WP_011091609.1">
    <property type="nucleotide sequence ID" value="NC_004545.1"/>
</dbReference>
<dbReference type="SMR" id="Q89A43"/>
<dbReference type="STRING" id="224915.bbp_503"/>
<dbReference type="KEGG" id="bab:bbp_503"/>
<dbReference type="eggNOG" id="COG2925">
    <property type="taxonomic scope" value="Bacteria"/>
</dbReference>
<dbReference type="HOGENOM" id="CLU_043508_1_1_6"/>
<dbReference type="OrthoDB" id="9763470at2"/>
<dbReference type="Proteomes" id="UP000000601">
    <property type="component" value="Chromosome"/>
</dbReference>
<dbReference type="GO" id="GO:0051575">
    <property type="term" value="F:5'-deoxyribose-5-phosphate lyase activity"/>
    <property type="evidence" value="ECO:0000250"/>
    <property type="project" value="UniProtKB"/>
</dbReference>
<dbReference type="GO" id="GO:0000287">
    <property type="term" value="F:magnesium ion binding"/>
    <property type="evidence" value="ECO:0000250"/>
    <property type="project" value="UniProtKB"/>
</dbReference>
<dbReference type="GO" id="GO:0008310">
    <property type="term" value="F:single-stranded DNA 3'-5' DNA exonuclease activity"/>
    <property type="evidence" value="ECO:0000250"/>
    <property type="project" value="UniProtKB"/>
</dbReference>
<dbReference type="GO" id="GO:0003697">
    <property type="term" value="F:single-stranded DNA binding"/>
    <property type="evidence" value="ECO:0000250"/>
    <property type="project" value="UniProtKB"/>
</dbReference>
<dbReference type="GO" id="GO:0006308">
    <property type="term" value="P:DNA catabolic process"/>
    <property type="evidence" value="ECO:0000250"/>
    <property type="project" value="UniProtKB"/>
</dbReference>
<dbReference type="GO" id="GO:0006281">
    <property type="term" value="P:DNA repair"/>
    <property type="evidence" value="ECO:0007669"/>
    <property type="project" value="UniProtKB-KW"/>
</dbReference>
<dbReference type="CDD" id="cd06138">
    <property type="entry name" value="ExoI_N"/>
    <property type="match status" value="1"/>
</dbReference>
<dbReference type="FunFam" id="3.30.420.10:FF:000033">
    <property type="entry name" value="Exodeoxyribonuclease I"/>
    <property type="match status" value="1"/>
</dbReference>
<dbReference type="Gene3D" id="3.30.1520.20">
    <property type="entry name" value="Exonuclease ExoI, domain 2"/>
    <property type="match status" value="1"/>
</dbReference>
<dbReference type="Gene3D" id="1.20.1280.70">
    <property type="entry name" value="Exonuclease ExoI, domain 3"/>
    <property type="match status" value="1"/>
</dbReference>
<dbReference type="Gene3D" id="3.30.420.10">
    <property type="entry name" value="Ribonuclease H-like superfamily/Ribonuclease H"/>
    <property type="match status" value="1"/>
</dbReference>
<dbReference type="InterPro" id="IPR023607">
    <property type="entry name" value="Exodeoxyribonuclease_I"/>
</dbReference>
<dbReference type="InterPro" id="IPR034748">
    <property type="entry name" value="EXOI_C"/>
</dbReference>
<dbReference type="InterPro" id="IPR034747">
    <property type="entry name" value="EXOI_SH3"/>
</dbReference>
<dbReference type="InterPro" id="IPR038649">
    <property type="entry name" value="EXOI_SH3_sf"/>
</dbReference>
<dbReference type="InterPro" id="IPR013620">
    <property type="entry name" value="Exonuc_1_C"/>
</dbReference>
<dbReference type="InterPro" id="IPR013520">
    <property type="entry name" value="Exonuclease_RNaseT/DNA_pol3"/>
</dbReference>
<dbReference type="InterPro" id="IPR012337">
    <property type="entry name" value="RNaseH-like_sf"/>
</dbReference>
<dbReference type="InterPro" id="IPR036397">
    <property type="entry name" value="RNaseH_sf"/>
</dbReference>
<dbReference type="NCBIfam" id="NF008746">
    <property type="entry name" value="PRK11779.1"/>
    <property type="match status" value="1"/>
</dbReference>
<dbReference type="Pfam" id="PF08411">
    <property type="entry name" value="Exonuc_X-T_C"/>
    <property type="match status" value="1"/>
</dbReference>
<dbReference type="Pfam" id="PF00929">
    <property type="entry name" value="RNase_T"/>
    <property type="match status" value="1"/>
</dbReference>
<dbReference type="PIRSF" id="PIRSF000977">
    <property type="entry name" value="Exodeoxyribonuclease_I"/>
    <property type="match status" value="1"/>
</dbReference>
<dbReference type="SUPFAM" id="SSF53098">
    <property type="entry name" value="Ribonuclease H-like"/>
    <property type="match status" value="1"/>
</dbReference>
<dbReference type="PROSITE" id="PS51785">
    <property type="entry name" value="EXOI_C"/>
    <property type="match status" value="1"/>
</dbReference>
<dbReference type="PROSITE" id="PS51784">
    <property type="entry name" value="EXOI_SH3"/>
    <property type="match status" value="1"/>
</dbReference>
<organism>
    <name type="scientific">Buchnera aphidicola subsp. Baizongia pistaciae (strain Bp)</name>
    <dbReference type="NCBI Taxonomy" id="224915"/>
    <lineage>
        <taxon>Bacteria</taxon>
        <taxon>Pseudomonadati</taxon>
        <taxon>Pseudomonadota</taxon>
        <taxon>Gammaproteobacteria</taxon>
        <taxon>Enterobacterales</taxon>
        <taxon>Erwiniaceae</taxon>
        <taxon>Buchnera</taxon>
    </lineage>
</organism>